<organism>
    <name type="scientific">Homo sapiens</name>
    <name type="common">Human</name>
    <dbReference type="NCBI Taxonomy" id="9606"/>
    <lineage>
        <taxon>Eukaryota</taxon>
        <taxon>Metazoa</taxon>
        <taxon>Chordata</taxon>
        <taxon>Craniata</taxon>
        <taxon>Vertebrata</taxon>
        <taxon>Euteleostomi</taxon>
        <taxon>Mammalia</taxon>
        <taxon>Eutheria</taxon>
        <taxon>Euarchontoglires</taxon>
        <taxon>Primates</taxon>
        <taxon>Haplorrhini</taxon>
        <taxon>Catarrhini</taxon>
        <taxon>Hominidae</taxon>
        <taxon>Homo</taxon>
    </lineage>
</organism>
<dbReference type="EMBL" id="AD001530">
    <property type="protein sequence ID" value="AAB81663.1"/>
    <property type="molecule type" value="mRNA"/>
</dbReference>
<dbReference type="EMBL" id="AK293119">
    <property type="protein sequence ID" value="BAF85808.1"/>
    <property type="molecule type" value="mRNA"/>
</dbReference>
<dbReference type="EMBL" id="AK313697">
    <property type="protein sequence ID" value="BAG36444.1"/>
    <property type="molecule type" value="mRNA"/>
</dbReference>
<dbReference type="EMBL" id="BX936365">
    <property type="status" value="NOT_ANNOTATED_CDS"/>
    <property type="molecule type" value="Genomic_DNA"/>
</dbReference>
<dbReference type="EMBL" id="CH471172">
    <property type="protein sequence ID" value="EAW72708.1"/>
    <property type="molecule type" value="Genomic_DNA"/>
</dbReference>
<dbReference type="EMBL" id="BC000028">
    <property type="protein sequence ID" value="AAH00028.1"/>
    <property type="molecule type" value="mRNA"/>
</dbReference>
<dbReference type="EMBL" id="BC015499">
    <property type="protein sequence ID" value="AAH15499.1"/>
    <property type="molecule type" value="mRNA"/>
</dbReference>
<dbReference type="EMBL" id="D83389">
    <property type="protein sequence ID" value="BAA11907.1"/>
    <property type="molecule type" value="Genomic_DNA"/>
</dbReference>
<dbReference type="EMBL" id="D83260">
    <property type="protein sequence ID" value="BAA11871.1"/>
    <property type="molecule type" value="mRNA"/>
</dbReference>
<dbReference type="EMBL" id="L44140">
    <property type="protein sequence ID" value="AAA92649.1"/>
    <property type="molecule type" value="Genomic_DNA"/>
</dbReference>
<dbReference type="CCDS" id="CCDS14751.1"/>
<dbReference type="PIR" id="JC5276">
    <property type="entry name" value="JC5276"/>
</dbReference>
<dbReference type="RefSeq" id="NP_004690.1">
    <property type="nucleotide sequence ID" value="NM_004699.4"/>
</dbReference>
<dbReference type="PDB" id="8C6J">
    <property type="method" value="EM"/>
    <property type="resolution" value="2.80 A"/>
    <property type="chains" value="CF=1-339"/>
</dbReference>
<dbReference type="PDB" id="9FMD">
    <property type="method" value="EM"/>
    <property type="resolution" value="3.30 A"/>
    <property type="chains" value="50=1-339"/>
</dbReference>
<dbReference type="PDBsum" id="8C6J"/>
<dbReference type="PDBsum" id="9FMD"/>
<dbReference type="EMDB" id="EMD-16452"/>
<dbReference type="SMR" id="Q14320"/>
<dbReference type="BioGRID" id="114578">
    <property type="interactions" value="127"/>
</dbReference>
<dbReference type="FunCoup" id="Q14320">
    <property type="interactions" value="1812"/>
</dbReference>
<dbReference type="IntAct" id="Q14320">
    <property type="interactions" value="39"/>
</dbReference>
<dbReference type="MINT" id="Q14320"/>
<dbReference type="STRING" id="9606.ENSP00000377225"/>
<dbReference type="GlyGen" id="Q14320">
    <property type="glycosylation" value="1 site, 1 O-linked glycan (1 site)"/>
</dbReference>
<dbReference type="iPTMnet" id="Q14320"/>
<dbReference type="MetOSite" id="Q14320"/>
<dbReference type="PhosphoSitePlus" id="Q14320"/>
<dbReference type="BioMuta" id="FAM50A"/>
<dbReference type="DMDM" id="12231058"/>
<dbReference type="jPOST" id="Q14320"/>
<dbReference type="MassIVE" id="Q14320"/>
<dbReference type="PaxDb" id="9606-ENSP00000377225"/>
<dbReference type="PeptideAtlas" id="Q14320"/>
<dbReference type="ProteomicsDB" id="59964"/>
<dbReference type="Pumba" id="Q14320"/>
<dbReference type="Antibodypedia" id="488">
    <property type="antibodies" value="201 antibodies from 29 providers"/>
</dbReference>
<dbReference type="DNASU" id="9130"/>
<dbReference type="Ensembl" id="ENST00000393600.8">
    <property type="protein sequence ID" value="ENSP00000377225.3"/>
    <property type="gene ID" value="ENSG00000071859.15"/>
</dbReference>
<dbReference type="GeneID" id="9130"/>
<dbReference type="KEGG" id="hsa:9130"/>
<dbReference type="MANE-Select" id="ENST00000393600.8">
    <property type="protein sequence ID" value="ENSP00000377225.3"/>
    <property type="RefSeq nucleotide sequence ID" value="NM_004699.4"/>
    <property type="RefSeq protein sequence ID" value="NP_004690.1"/>
</dbReference>
<dbReference type="UCSC" id="uc004fll.4">
    <property type="organism name" value="human"/>
</dbReference>
<dbReference type="AGR" id="HGNC:18786"/>
<dbReference type="CTD" id="9130"/>
<dbReference type="DisGeNET" id="9130"/>
<dbReference type="GeneCards" id="FAM50A"/>
<dbReference type="HGNC" id="HGNC:18786">
    <property type="gene designation" value="FAM50A"/>
</dbReference>
<dbReference type="HPA" id="ENSG00000071859">
    <property type="expression patterns" value="Low tissue specificity"/>
</dbReference>
<dbReference type="MalaCards" id="FAM50A"/>
<dbReference type="MIM" id="300261">
    <property type="type" value="phenotype"/>
</dbReference>
<dbReference type="MIM" id="300453">
    <property type="type" value="gene"/>
</dbReference>
<dbReference type="neXtProt" id="NX_Q14320"/>
<dbReference type="OpenTargets" id="ENSG00000071859"/>
<dbReference type="Orphanet" id="528084">
    <property type="disease" value="Non-specific syndromic intellectual disability"/>
</dbReference>
<dbReference type="PharmGKB" id="PA134984709"/>
<dbReference type="VEuPathDB" id="HostDB:ENSG00000071859"/>
<dbReference type="eggNOG" id="KOG2894">
    <property type="taxonomic scope" value="Eukaryota"/>
</dbReference>
<dbReference type="GeneTree" id="ENSGT00390000004735"/>
<dbReference type="HOGENOM" id="CLU_037985_1_1_1"/>
<dbReference type="InParanoid" id="Q14320"/>
<dbReference type="OMA" id="DFIWVFL"/>
<dbReference type="OrthoDB" id="1562195at2759"/>
<dbReference type="PAN-GO" id="Q14320">
    <property type="GO annotations" value="2 GO annotations based on evolutionary models"/>
</dbReference>
<dbReference type="PhylomeDB" id="Q14320"/>
<dbReference type="TreeFam" id="TF314738"/>
<dbReference type="PathwayCommons" id="Q14320"/>
<dbReference type="Reactome" id="R-HSA-72163">
    <property type="pathway name" value="mRNA Splicing - Major Pathway"/>
</dbReference>
<dbReference type="SignaLink" id="Q14320"/>
<dbReference type="BioGRID-ORCS" id="9130">
    <property type="hits" value="162 hits in 783 CRISPR screens"/>
</dbReference>
<dbReference type="CD-CODE" id="91857CE7">
    <property type="entry name" value="Nucleolus"/>
</dbReference>
<dbReference type="ChiTaRS" id="FAM50A">
    <property type="organism name" value="human"/>
</dbReference>
<dbReference type="GeneWiki" id="FAM50A"/>
<dbReference type="GenomeRNAi" id="9130"/>
<dbReference type="Pharos" id="Q14320">
    <property type="development level" value="Tbio"/>
</dbReference>
<dbReference type="PRO" id="PR:Q14320"/>
<dbReference type="Proteomes" id="UP000005640">
    <property type="component" value="Chromosome X"/>
</dbReference>
<dbReference type="RNAct" id="Q14320">
    <property type="molecule type" value="protein"/>
</dbReference>
<dbReference type="Bgee" id="ENSG00000071859">
    <property type="expression patterns" value="Expressed in sural nerve and 192 other cell types or tissues"/>
</dbReference>
<dbReference type="ExpressionAtlas" id="Q14320">
    <property type="expression patterns" value="baseline and differential"/>
</dbReference>
<dbReference type="GO" id="GO:0005654">
    <property type="term" value="C:nucleoplasm"/>
    <property type="evidence" value="ECO:0000314"/>
    <property type="project" value="HPA"/>
</dbReference>
<dbReference type="GO" id="GO:0005634">
    <property type="term" value="C:nucleus"/>
    <property type="evidence" value="ECO:0000314"/>
    <property type="project" value="UniProtKB"/>
</dbReference>
<dbReference type="GO" id="GO:0003723">
    <property type="term" value="F:RNA binding"/>
    <property type="evidence" value="ECO:0007005"/>
    <property type="project" value="UniProtKB"/>
</dbReference>
<dbReference type="GO" id="GO:0006325">
    <property type="term" value="P:chromatin organization"/>
    <property type="evidence" value="ECO:0000318"/>
    <property type="project" value="GO_Central"/>
</dbReference>
<dbReference type="GO" id="GO:0006397">
    <property type="term" value="P:mRNA processing"/>
    <property type="evidence" value="ECO:0007669"/>
    <property type="project" value="UniProtKB-KW"/>
</dbReference>
<dbReference type="GO" id="GO:0043484">
    <property type="term" value="P:regulation of RNA splicing"/>
    <property type="evidence" value="ECO:0000315"/>
    <property type="project" value="UniProtKB"/>
</dbReference>
<dbReference type="GO" id="GO:0008380">
    <property type="term" value="P:RNA splicing"/>
    <property type="evidence" value="ECO:0007669"/>
    <property type="project" value="UniProtKB-KW"/>
</dbReference>
<dbReference type="GO" id="GO:0007283">
    <property type="term" value="P:spermatogenesis"/>
    <property type="evidence" value="ECO:0000303"/>
    <property type="project" value="UniProtKB"/>
</dbReference>
<dbReference type="InterPro" id="IPR048337">
    <property type="entry name" value="FAM50A/XAP5_C"/>
</dbReference>
<dbReference type="InterPro" id="IPR007005">
    <property type="entry name" value="XAP5"/>
</dbReference>
<dbReference type="PANTHER" id="PTHR12722:SF2">
    <property type="entry name" value="PROTEIN FAM50A"/>
    <property type="match status" value="1"/>
</dbReference>
<dbReference type="PANTHER" id="PTHR12722">
    <property type="entry name" value="XAP-5 PROTEIN-RELATED"/>
    <property type="match status" value="1"/>
</dbReference>
<dbReference type="Pfam" id="PF04921">
    <property type="entry name" value="XAP5"/>
    <property type="match status" value="1"/>
</dbReference>
<name>FA50A_HUMAN</name>
<accession>Q14320</accession>
<accession>A8KAQ4</accession>
<accession>B2R997</accession>
<accession>Q5HY37</accession>
<accession>Q6PJH5</accession>
<comment type="function">
    <text evidence="3">Probably involved in the regulation of pre-mRNA splicing.</text>
</comment>
<comment type="subunit">
    <text evidence="3">Interacts with EFTUD2, a component of the spliceosome U5 complex (PubMed:32703943). Interacts with DDX41, a component of the spliceosome C complex (PubMed:32703943).</text>
</comment>
<comment type="subcellular location">
    <subcellularLocation>
        <location evidence="3">Nucleus</location>
    </subcellularLocation>
</comment>
<comment type="tissue specificity">
    <text evidence="3 4">Widely expressed in fetal and adult tissues. Mostly abundant in fetal brain, liver and kidney; in the adult, high levels were also observed in heart, skeletal muscle, spleen, thymus, prostate and small intestine. Expressed in fetal cerebellum and hypothalamus. Low expression is observed in fetal temporal lobe (PubMed:32703943).</text>
</comment>
<comment type="disease" evidence="3">
    <disease id="DI-05903">
        <name>Intellectual developmental disorder, X-linked, syndromic, Armfield type</name>
        <acronym>MRXSA</acronym>
        <description>An X-linked recessive disorder characterized by global developmental delay with impaired intellectual development, walking difficulties and poor or absent speech. Affected individuals display a distinctive phenotype characterized by postnatal growth retardation, variable head circumference with a prominent forehead and dysmorphic facial features, ocular abnormalities, and seizures.</description>
        <dbReference type="MIM" id="300261"/>
    </disease>
    <text>The disease is caused by variants affecting the gene represented in this entry.</text>
</comment>
<comment type="similarity">
    <text evidence="5">Belongs to the FAM50 family.</text>
</comment>
<evidence type="ECO:0000255" key="1"/>
<evidence type="ECO:0000256" key="2">
    <source>
        <dbReference type="SAM" id="MobiDB-lite"/>
    </source>
</evidence>
<evidence type="ECO:0000269" key="3">
    <source>
    </source>
</evidence>
<evidence type="ECO:0000269" key="4">
    <source>
    </source>
</evidence>
<evidence type="ECO:0000305" key="5"/>
<evidence type="ECO:0007744" key="6">
    <source>
    </source>
</evidence>
<evidence type="ECO:0007744" key="7">
    <source>
    </source>
</evidence>
<proteinExistence type="evidence at protein level"/>
<feature type="initiator methionine" description="Removed" evidence="6">
    <location>
        <position position="1"/>
    </location>
</feature>
<feature type="chain" id="PRO_0000068284" description="Protein FAM50A">
    <location>
        <begin position="2"/>
        <end position="339"/>
    </location>
</feature>
<feature type="region of interest" description="Disordered" evidence="2">
    <location>
        <begin position="1"/>
        <end position="31"/>
    </location>
</feature>
<feature type="region of interest" description="Disordered" evidence="2">
    <location>
        <begin position="121"/>
        <end position="177"/>
    </location>
</feature>
<feature type="short sequence motif" description="Nuclear localization signal" evidence="1">
    <location>
        <begin position="152"/>
        <end position="155"/>
    </location>
</feature>
<feature type="compositionally biased region" description="Acidic residues" evidence="2">
    <location>
        <begin position="124"/>
        <end position="146"/>
    </location>
</feature>
<feature type="compositionally biased region" description="Basic and acidic residues" evidence="2">
    <location>
        <begin position="168"/>
        <end position="177"/>
    </location>
</feature>
<feature type="modified residue" description="N-acetylalanine" evidence="6">
    <location>
        <position position="2"/>
    </location>
</feature>
<feature type="cross-link" description="Glycyl lysine isopeptide (Lys-Gly) (interchain with G-Cter in SUMO2)" evidence="7">
    <location>
        <position position="100"/>
    </location>
</feature>
<feature type="sequence variant" id="VAR_084563" description="It rescues craniofacial patterning defects in zebrafish morphant embryos; dbSNP:rs149558328." evidence="3">
    <original>A</original>
    <variation>V</variation>
    <location>
        <position position="137"/>
    </location>
</feature>
<feature type="sequence variant" id="VAR_084564" description="It rescues craniofacial patterning defects in zebrafish morphant embryos; dbSNP:rs782017549." evidence="3">
    <original>E</original>
    <variation>K</variation>
    <location>
        <position position="143"/>
    </location>
</feature>
<feature type="sequence variant" id="VAR_084565" description="In MRXSA; uncertain significance; does not affect FAM50A protein levels in patient cells; does not affect localization to the nucleus; dbSNP:rs2068793121." evidence="3">
    <original>W</original>
    <variation>G</variation>
    <location>
        <position position="206"/>
    </location>
</feature>
<feature type="sequence variant" id="VAR_084566" description="In MRXSA; hypomorphic variant; does not fully rescue craniofacial patterning defects in zebrafish morphant embryos; does not affect FAM50A protein levels in patient cells; does not affect localization to the nucleus; dbSNP:rs2068797150." evidence="3">
    <original>E</original>
    <variation>G</variation>
    <location>
        <position position="254"/>
    </location>
</feature>
<feature type="sequence variant" id="VAR_084567" description="In MRXSA; hypomorphic variant; does not fully rescue craniofacial patterning defects in zebrafish morphant embryos; does not affect localization to the nucleus; dbSNP:rs2068797192." evidence="3">
    <original>D</original>
    <variation>G</variation>
    <location>
        <position position="255"/>
    </location>
</feature>
<feature type="sequence variant" id="VAR_084568" description="In MRXSA; hypomorphic variant; does not fully rescue craniofacial patterning defects in zebrafish morphant embryos; dbSNP:rs2068797171." evidence="3">
    <original>D</original>
    <variation>N</variation>
    <location>
        <position position="255"/>
    </location>
</feature>
<feature type="sequence variant" id="VAR_084569" description="In MRXSA; hypomorphic variant; does not fully rescue craniofacial patterning defects in zebrafish morphant embryos; dbSNP:rs2068798311." evidence="3">
    <original>R</original>
    <variation>W</variation>
    <location>
        <position position="273"/>
    </location>
</feature>
<feature type="sequence conflict" description="In Ref. 2; BAF85808." evidence="5" ref="2">
    <original>F</original>
    <variation>S</variation>
    <location>
        <position position="166"/>
    </location>
</feature>
<feature type="sequence conflict" description="In Ref. 2; BAF85808." evidence="5" ref="2">
    <original>E</original>
    <variation>G</variation>
    <location>
        <position position="330"/>
    </location>
</feature>
<protein>
    <recommendedName>
        <fullName>Protein FAM50A</fullName>
    </recommendedName>
    <alternativeName>
        <fullName>Protein HXC-26</fullName>
    </alternativeName>
    <alternativeName>
        <fullName>Protein XAP-5</fullName>
    </alternativeName>
</protein>
<reference key="1">
    <citation type="journal article" date="1997" name="Genomics">
        <title>Differential expression of XAP5, a candidate disease gene.</title>
        <authorList>
            <person name="Mazzarella R."/>
            <person name="Pengue G."/>
            <person name="Yoon J."/>
            <person name="Jones J."/>
            <person name="Schlessinger D."/>
        </authorList>
    </citation>
    <scope>NUCLEOTIDE SEQUENCE [MRNA]</scope>
    <scope>TISSUE SPECIFICITY</scope>
</reference>
<reference key="2">
    <citation type="journal article" date="2004" name="Nat. Genet.">
        <title>Complete sequencing and characterization of 21,243 full-length human cDNAs.</title>
        <authorList>
            <person name="Ota T."/>
            <person name="Suzuki Y."/>
            <person name="Nishikawa T."/>
            <person name="Otsuki T."/>
            <person name="Sugiyama T."/>
            <person name="Irie R."/>
            <person name="Wakamatsu A."/>
            <person name="Hayashi K."/>
            <person name="Sato H."/>
            <person name="Nagai K."/>
            <person name="Kimura K."/>
            <person name="Makita H."/>
            <person name="Sekine M."/>
            <person name="Obayashi M."/>
            <person name="Nishi T."/>
            <person name="Shibahara T."/>
            <person name="Tanaka T."/>
            <person name="Ishii S."/>
            <person name="Yamamoto J."/>
            <person name="Saito K."/>
            <person name="Kawai Y."/>
            <person name="Isono Y."/>
            <person name="Nakamura Y."/>
            <person name="Nagahari K."/>
            <person name="Murakami K."/>
            <person name="Yasuda T."/>
            <person name="Iwayanagi T."/>
            <person name="Wagatsuma M."/>
            <person name="Shiratori A."/>
            <person name="Sudo H."/>
            <person name="Hosoiri T."/>
            <person name="Kaku Y."/>
            <person name="Kodaira H."/>
            <person name="Kondo H."/>
            <person name="Sugawara M."/>
            <person name="Takahashi M."/>
            <person name="Kanda K."/>
            <person name="Yokoi T."/>
            <person name="Furuya T."/>
            <person name="Kikkawa E."/>
            <person name="Omura Y."/>
            <person name="Abe K."/>
            <person name="Kamihara K."/>
            <person name="Katsuta N."/>
            <person name="Sato K."/>
            <person name="Tanikawa M."/>
            <person name="Yamazaki M."/>
            <person name="Ninomiya K."/>
            <person name="Ishibashi T."/>
            <person name="Yamashita H."/>
            <person name="Murakawa K."/>
            <person name="Fujimori K."/>
            <person name="Tanai H."/>
            <person name="Kimata M."/>
            <person name="Watanabe M."/>
            <person name="Hiraoka S."/>
            <person name="Chiba Y."/>
            <person name="Ishida S."/>
            <person name="Ono Y."/>
            <person name="Takiguchi S."/>
            <person name="Watanabe S."/>
            <person name="Yosida M."/>
            <person name="Hotuta T."/>
            <person name="Kusano J."/>
            <person name="Kanehori K."/>
            <person name="Takahashi-Fujii A."/>
            <person name="Hara H."/>
            <person name="Tanase T.-O."/>
            <person name="Nomura Y."/>
            <person name="Togiya S."/>
            <person name="Komai F."/>
            <person name="Hara R."/>
            <person name="Takeuchi K."/>
            <person name="Arita M."/>
            <person name="Imose N."/>
            <person name="Musashino K."/>
            <person name="Yuuki H."/>
            <person name="Oshima A."/>
            <person name="Sasaki N."/>
            <person name="Aotsuka S."/>
            <person name="Yoshikawa Y."/>
            <person name="Matsunawa H."/>
            <person name="Ichihara T."/>
            <person name="Shiohata N."/>
            <person name="Sano S."/>
            <person name="Moriya S."/>
            <person name="Momiyama H."/>
            <person name="Satoh N."/>
            <person name="Takami S."/>
            <person name="Terashima Y."/>
            <person name="Suzuki O."/>
            <person name="Nakagawa S."/>
            <person name="Senoh A."/>
            <person name="Mizoguchi H."/>
            <person name="Goto Y."/>
            <person name="Shimizu F."/>
            <person name="Wakebe H."/>
            <person name="Hishigaki H."/>
            <person name="Watanabe T."/>
            <person name="Sugiyama A."/>
            <person name="Takemoto M."/>
            <person name="Kawakami B."/>
            <person name="Yamazaki M."/>
            <person name="Watanabe K."/>
            <person name="Kumagai A."/>
            <person name="Itakura S."/>
            <person name="Fukuzumi Y."/>
            <person name="Fujimori Y."/>
            <person name="Komiyama M."/>
            <person name="Tashiro H."/>
            <person name="Tanigami A."/>
            <person name="Fujiwara T."/>
            <person name="Ono T."/>
            <person name="Yamada K."/>
            <person name="Fujii Y."/>
            <person name="Ozaki K."/>
            <person name="Hirao M."/>
            <person name="Ohmori Y."/>
            <person name="Kawabata A."/>
            <person name="Hikiji T."/>
            <person name="Kobatake N."/>
            <person name="Inagaki H."/>
            <person name="Ikema Y."/>
            <person name="Okamoto S."/>
            <person name="Okitani R."/>
            <person name="Kawakami T."/>
            <person name="Noguchi S."/>
            <person name="Itoh T."/>
            <person name="Shigeta K."/>
            <person name="Senba T."/>
            <person name="Matsumura K."/>
            <person name="Nakajima Y."/>
            <person name="Mizuno T."/>
            <person name="Morinaga M."/>
            <person name="Sasaki M."/>
            <person name="Togashi T."/>
            <person name="Oyama M."/>
            <person name="Hata H."/>
            <person name="Watanabe M."/>
            <person name="Komatsu T."/>
            <person name="Mizushima-Sugano J."/>
            <person name="Satoh T."/>
            <person name="Shirai Y."/>
            <person name="Takahashi Y."/>
            <person name="Nakagawa K."/>
            <person name="Okumura K."/>
            <person name="Nagase T."/>
            <person name="Nomura N."/>
            <person name="Kikuchi H."/>
            <person name="Masuho Y."/>
            <person name="Yamashita R."/>
            <person name="Nakai K."/>
            <person name="Yada T."/>
            <person name="Nakamura Y."/>
            <person name="Ohara O."/>
            <person name="Isogai T."/>
            <person name="Sugano S."/>
        </authorList>
    </citation>
    <scope>NUCLEOTIDE SEQUENCE [LARGE SCALE MRNA]</scope>
</reference>
<reference key="3">
    <citation type="journal article" date="2005" name="Nature">
        <title>The DNA sequence of the human X chromosome.</title>
        <authorList>
            <person name="Ross M.T."/>
            <person name="Grafham D.V."/>
            <person name="Coffey A.J."/>
            <person name="Scherer S."/>
            <person name="McLay K."/>
            <person name="Muzny D."/>
            <person name="Platzer M."/>
            <person name="Howell G.R."/>
            <person name="Burrows C."/>
            <person name="Bird C.P."/>
            <person name="Frankish A."/>
            <person name="Lovell F.L."/>
            <person name="Howe K.L."/>
            <person name="Ashurst J.L."/>
            <person name="Fulton R.S."/>
            <person name="Sudbrak R."/>
            <person name="Wen G."/>
            <person name="Jones M.C."/>
            <person name="Hurles M.E."/>
            <person name="Andrews T.D."/>
            <person name="Scott C.E."/>
            <person name="Searle S."/>
            <person name="Ramser J."/>
            <person name="Whittaker A."/>
            <person name="Deadman R."/>
            <person name="Carter N.P."/>
            <person name="Hunt S.E."/>
            <person name="Chen R."/>
            <person name="Cree A."/>
            <person name="Gunaratne P."/>
            <person name="Havlak P."/>
            <person name="Hodgson A."/>
            <person name="Metzker M.L."/>
            <person name="Richards S."/>
            <person name="Scott G."/>
            <person name="Steffen D."/>
            <person name="Sodergren E."/>
            <person name="Wheeler D.A."/>
            <person name="Worley K.C."/>
            <person name="Ainscough R."/>
            <person name="Ambrose K.D."/>
            <person name="Ansari-Lari M.A."/>
            <person name="Aradhya S."/>
            <person name="Ashwell R.I."/>
            <person name="Babbage A.K."/>
            <person name="Bagguley C.L."/>
            <person name="Ballabio A."/>
            <person name="Banerjee R."/>
            <person name="Barker G.E."/>
            <person name="Barlow K.F."/>
            <person name="Barrett I.P."/>
            <person name="Bates K.N."/>
            <person name="Beare D.M."/>
            <person name="Beasley H."/>
            <person name="Beasley O."/>
            <person name="Beck A."/>
            <person name="Bethel G."/>
            <person name="Blechschmidt K."/>
            <person name="Brady N."/>
            <person name="Bray-Allen S."/>
            <person name="Bridgeman A.M."/>
            <person name="Brown A.J."/>
            <person name="Brown M.J."/>
            <person name="Bonnin D."/>
            <person name="Bruford E.A."/>
            <person name="Buhay C."/>
            <person name="Burch P."/>
            <person name="Burford D."/>
            <person name="Burgess J."/>
            <person name="Burrill W."/>
            <person name="Burton J."/>
            <person name="Bye J.M."/>
            <person name="Carder C."/>
            <person name="Carrel L."/>
            <person name="Chako J."/>
            <person name="Chapman J.C."/>
            <person name="Chavez D."/>
            <person name="Chen E."/>
            <person name="Chen G."/>
            <person name="Chen Y."/>
            <person name="Chen Z."/>
            <person name="Chinault C."/>
            <person name="Ciccodicola A."/>
            <person name="Clark S.Y."/>
            <person name="Clarke G."/>
            <person name="Clee C.M."/>
            <person name="Clegg S."/>
            <person name="Clerc-Blankenburg K."/>
            <person name="Clifford K."/>
            <person name="Cobley V."/>
            <person name="Cole C.G."/>
            <person name="Conquer J.S."/>
            <person name="Corby N."/>
            <person name="Connor R.E."/>
            <person name="David R."/>
            <person name="Davies J."/>
            <person name="Davis C."/>
            <person name="Davis J."/>
            <person name="Delgado O."/>
            <person name="Deshazo D."/>
            <person name="Dhami P."/>
            <person name="Ding Y."/>
            <person name="Dinh H."/>
            <person name="Dodsworth S."/>
            <person name="Draper H."/>
            <person name="Dugan-Rocha S."/>
            <person name="Dunham A."/>
            <person name="Dunn M."/>
            <person name="Durbin K.J."/>
            <person name="Dutta I."/>
            <person name="Eades T."/>
            <person name="Ellwood M."/>
            <person name="Emery-Cohen A."/>
            <person name="Errington H."/>
            <person name="Evans K.L."/>
            <person name="Faulkner L."/>
            <person name="Francis F."/>
            <person name="Frankland J."/>
            <person name="Fraser A.E."/>
            <person name="Galgoczy P."/>
            <person name="Gilbert J."/>
            <person name="Gill R."/>
            <person name="Gloeckner G."/>
            <person name="Gregory S.G."/>
            <person name="Gribble S."/>
            <person name="Griffiths C."/>
            <person name="Grocock R."/>
            <person name="Gu Y."/>
            <person name="Gwilliam R."/>
            <person name="Hamilton C."/>
            <person name="Hart E.A."/>
            <person name="Hawes A."/>
            <person name="Heath P.D."/>
            <person name="Heitmann K."/>
            <person name="Hennig S."/>
            <person name="Hernandez J."/>
            <person name="Hinzmann B."/>
            <person name="Ho S."/>
            <person name="Hoffs M."/>
            <person name="Howden P.J."/>
            <person name="Huckle E.J."/>
            <person name="Hume J."/>
            <person name="Hunt P.J."/>
            <person name="Hunt A.R."/>
            <person name="Isherwood J."/>
            <person name="Jacob L."/>
            <person name="Johnson D."/>
            <person name="Jones S."/>
            <person name="de Jong P.J."/>
            <person name="Joseph S.S."/>
            <person name="Keenan S."/>
            <person name="Kelly S."/>
            <person name="Kershaw J.K."/>
            <person name="Khan Z."/>
            <person name="Kioschis P."/>
            <person name="Klages S."/>
            <person name="Knights A.J."/>
            <person name="Kosiura A."/>
            <person name="Kovar-Smith C."/>
            <person name="Laird G.K."/>
            <person name="Langford C."/>
            <person name="Lawlor S."/>
            <person name="Leversha M."/>
            <person name="Lewis L."/>
            <person name="Liu W."/>
            <person name="Lloyd C."/>
            <person name="Lloyd D.M."/>
            <person name="Loulseged H."/>
            <person name="Loveland J.E."/>
            <person name="Lovell J.D."/>
            <person name="Lozado R."/>
            <person name="Lu J."/>
            <person name="Lyne R."/>
            <person name="Ma J."/>
            <person name="Maheshwari M."/>
            <person name="Matthews L.H."/>
            <person name="McDowall J."/>
            <person name="McLaren S."/>
            <person name="McMurray A."/>
            <person name="Meidl P."/>
            <person name="Meitinger T."/>
            <person name="Milne S."/>
            <person name="Miner G."/>
            <person name="Mistry S.L."/>
            <person name="Morgan M."/>
            <person name="Morris S."/>
            <person name="Mueller I."/>
            <person name="Mullikin J.C."/>
            <person name="Nguyen N."/>
            <person name="Nordsiek G."/>
            <person name="Nyakatura G."/>
            <person name="O'dell C.N."/>
            <person name="Okwuonu G."/>
            <person name="Palmer S."/>
            <person name="Pandian R."/>
            <person name="Parker D."/>
            <person name="Parrish J."/>
            <person name="Pasternak S."/>
            <person name="Patel D."/>
            <person name="Pearce A.V."/>
            <person name="Pearson D.M."/>
            <person name="Pelan S.E."/>
            <person name="Perez L."/>
            <person name="Porter K.M."/>
            <person name="Ramsey Y."/>
            <person name="Reichwald K."/>
            <person name="Rhodes S."/>
            <person name="Ridler K.A."/>
            <person name="Schlessinger D."/>
            <person name="Schueler M.G."/>
            <person name="Sehra H.K."/>
            <person name="Shaw-Smith C."/>
            <person name="Shen H."/>
            <person name="Sheridan E.M."/>
            <person name="Shownkeen R."/>
            <person name="Skuce C.D."/>
            <person name="Smith M.L."/>
            <person name="Sotheran E.C."/>
            <person name="Steingruber H.E."/>
            <person name="Steward C.A."/>
            <person name="Storey R."/>
            <person name="Swann R.M."/>
            <person name="Swarbreck D."/>
            <person name="Tabor P.E."/>
            <person name="Taudien S."/>
            <person name="Taylor T."/>
            <person name="Teague B."/>
            <person name="Thomas K."/>
            <person name="Thorpe A."/>
            <person name="Timms K."/>
            <person name="Tracey A."/>
            <person name="Trevanion S."/>
            <person name="Tromans A.C."/>
            <person name="d'Urso M."/>
            <person name="Verduzco D."/>
            <person name="Villasana D."/>
            <person name="Waldron L."/>
            <person name="Wall M."/>
            <person name="Wang Q."/>
            <person name="Warren J."/>
            <person name="Warry G.L."/>
            <person name="Wei X."/>
            <person name="West A."/>
            <person name="Whitehead S.L."/>
            <person name="Whiteley M.N."/>
            <person name="Wilkinson J.E."/>
            <person name="Willey D.L."/>
            <person name="Williams G."/>
            <person name="Williams L."/>
            <person name="Williamson A."/>
            <person name="Williamson H."/>
            <person name="Wilming L."/>
            <person name="Woodmansey R.L."/>
            <person name="Wray P.W."/>
            <person name="Yen J."/>
            <person name="Zhang J."/>
            <person name="Zhou J."/>
            <person name="Zoghbi H."/>
            <person name="Zorilla S."/>
            <person name="Buck D."/>
            <person name="Reinhardt R."/>
            <person name="Poustka A."/>
            <person name="Rosenthal A."/>
            <person name="Lehrach H."/>
            <person name="Meindl A."/>
            <person name="Minx P.J."/>
            <person name="Hillier L.W."/>
            <person name="Willard H.F."/>
            <person name="Wilson R.K."/>
            <person name="Waterston R.H."/>
            <person name="Rice C.M."/>
            <person name="Vaudin M."/>
            <person name="Coulson A."/>
            <person name="Nelson D.L."/>
            <person name="Weinstock G."/>
            <person name="Sulston J.E."/>
            <person name="Durbin R.M."/>
            <person name="Hubbard T."/>
            <person name="Gibbs R.A."/>
            <person name="Beck S."/>
            <person name="Rogers J."/>
            <person name="Bentley D.R."/>
        </authorList>
    </citation>
    <scope>NUCLEOTIDE SEQUENCE [LARGE SCALE GENOMIC DNA]</scope>
</reference>
<reference key="4">
    <citation type="submission" date="2005-09" db="EMBL/GenBank/DDBJ databases">
        <authorList>
            <person name="Mural R.J."/>
            <person name="Istrail S."/>
            <person name="Sutton G.G."/>
            <person name="Florea L."/>
            <person name="Halpern A.L."/>
            <person name="Mobarry C.M."/>
            <person name="Lippert R."/>
            <person name="Walenz B."/>
            <person name="Shatkay H."/>
            <person name="Dew I."/>
            <person name="Miller J.R."/>
            <person name="Flanigan M.J."/>
            <person name="Edwards N.J."/>
            <person name="Bolanos R."/>
            <person name="Fasulo D."/>
            <person name="Halldorsson B.V."/>
            <person name="Hannenhalli S."/>
            <person name="Turner R."/>
            <person name="Yooseph S."/>
            <person name="Lu F."/>
            <person name="Nusskern D.R."/>
            <person name="Shue B.C."/>
            <person name="Zheng X.H."/>
            <person name="Zhong F."/>
            <person name="Delcher A.L."/>
            <person name="Huson D.H."/>
            <person name="Kravitz S.A."/>
            <person name="Mouchard L."/>
            <person name="Reinert K."/>
            <person name="Remington K.A."/>
            <person name="Clark A.G."/>
            <person name="Waterman M.S."/>
            <person name="Eichler E.E."/>
            <person name="Adams M.D."/>
            <person name="Hunkapiller M.W."/>
            <person name="Myers E.W."/>
            <person name="Venter J.C."/>
        </authorList>
    </citation>
    <scope>NUCLEOTIDE SEQUENCE [LARGE SCALE GENOMIC DNA]</scope>
</reference>
<reference key="5">
    <citation type="journal article" date="2004" name="Genome Res.">
        <title>The status, quality, and expansion of the NIH full-length cDNA project: the Mammalian Gene Collection (MGC).</title>
        <authorList>
            <consortium name="The MGC Project Team"/>
        </authorList>
    </citation>
    <scope>NUCLEOTIDE SEQUENCE [LARGE SCALE MRNA]</scope>
    <source>
        <tissue>Colon</tissue>
        <tissue>Placenta</tissue>
    </source>
</reference>
<reference key="6">
    <citation type="journal article" date="1996" name="DNA Res.">
        <title>Isolation and analysis of a novel gene, HXC-26, adjacent to the rab GDP dissociation inhibitor gene located at human chromosome Xq28 region.</title>
        <authorList>
            <person name="Toyoda A."/>
            <person name="Sakai T."/>
            <person name="Sugiyama Y."/>
            <person name="Kusuda J."/>
            <person name="Hashimoto K."/>
            <person name="Maeda H."/>
        </authorList>
    </citation>
    <scope>NUCLEOTIDE SEQUENCE [GENOMIC DNA / MRNA] OF 15-339</scope>
    <source>
        <tissue>Skeletal muscle</tissue>
    </source>
</reference>
<reference key="7">
    <citation type="journal article" date="1996" name="Hum. Mol. Genet.">
        <title>Long-range sequence analysis in Xq28: thirteen known and six candidate genes in 219.4 kb of high GC DNA between the RCP/GCP and G6PD loci.</title>
        <authorList>
            <person name="Chen E.Y."/>
            <person name="Zollo M."/>
            <person name="Mazzarella R.A."/>
            <person name="Ciccodicola A."/>
            <person name="Chen C.-N."/>
            <person name="Zuo L."/>
            <person name="Heiner C."/>
            <person name="Burough F.W."/>
            <person name="Ripetto M."/>
            <person name="Schlessinger D."/>
            <person name="D'Urso M."/>
        </authorList>
    </citation>
    <scope>NUCLEOTIDE SEQUENCE [GENOMIC DNA] OF 66-339</scope>
</reference>
<reference key="8">
    <citation type="submission" date="2008-12" db="UniProtKB">
        <authorList>
            <person name="Lubec G."/>
            <person name="Chen W.-Q."/>
            <person name="Sun Y."/>
        </authorList>
    </citation>
    <scope>PROTEIN SEQUENCE OF 159-170</scope>
    <scope>IDENTIFICATION BY MASS SPECTROMETRY</scope>
    <source>
        <tissue>Fetal brain cortex</tissue>
    </source>
</reference>
<reference key="9">
    <citation type="journal article" date="2011" name="BMC Syst. Biol.">
        <title>Initial characterization of the human central proteome.</title>
        <authorList>
            <person name="Burkard T.R."/>
            <person name="Planyavsky M."/>
            <person name="Kaupe I."/>
            <person name="Breitwieser F.P."/>
            <person name="Buerckstuemmer T."/>
            <person name="Bennett K.L."/>
            <person name="Superti-Furga G."/>
            <person name="Colinge J."/>
        </authorList>
    </citation>
    <scope>IDENTIFICATION BY MASS SPECTROMETRY [LARGE SCALE ANALYSIS]</scope>
</reference>
<reference key="10">
    <citation type="journal article" date="2012" name="Proc. Natl. Acad. Sci. U.S.A.">
        <title>N-terminal acetylome analyses and functional insights of the N-terminal acetyltransferase NatB.</title>
        <authorList>
            <person name="Van Damme P."/>
            <person name="Lasa M."/>
            <person name="Polevoda B."/>
            <person name="Gazquez C."/>
            <person name="Elosegui-Artola A."/>
            <person name="Kim D.S."/>
            <person name="De Juan-Pardo E."/>
            <person name="Demeyer K."/>
            <person name="Hole K."/>
            <person name="Larrea E."/>
            <person name="Timmerman E."/>
            <person name="Prieto J."/>
            <person name="Arnesen T."/>
            <person name="Sherman F."/>
            <person name="Gevaert K."/>
            <person name="Aldabe R."/>
        </authorList>
    </citation>
    <scope>ACETYLATION [LARGE SCALE ANALYSIS] AT ALA-2</scope>
    <scope>CLEAVAGE OF INITIATOR METHIONINE [LARGE SCALE ANALYSIS]</scope>
    <scope>IDENTIFICATION BY MASS SPECTROMETRY [LARGE SCALE ANALYSIS]</scope>
</reference>
<reference key="11">
    <citation type="journal article" date="2017" name="Nat. Struct. Mol. Biol.">
        <title>Site-specific mapping of the human SUMO proteome reveals co-modification with phosphorylation.</title>
        <authorList>
            <person name="Hendriks I.A."/>
            <person name="Lyon D."/>
            <person name="Young C."/>
            <person name="Jensen L.J."/>
            <person name="Vertegaal A.C."/>
            <person name="Nielsen M.L."/>
        </authorList>
    </citation>
    <scope>SUMOYLATION [LARGE SCALE ANALYSIS] AT LYS-100</scope>
    <scope>IDENTIFICATION BY MASS SPECTROMETRY [LARGE SCALE ANALYSIS]</scope>
</reference>
<reference key="12">
    <citation type="journal article" date="2020" name="Nat. Commun.">
        <title>Mutations in FAM50A suggest that Armfield XLID syndrome is a spliceosomopathy.</title>
        <authorList>
            <person name="Lee Y.R."/>
            <person name="Khan K."/>
            <person name="Armfield-Uhas K."/>
            <person name="Srikanth S."/>
            <person name="Thompson N.A."/>
            <person name="Pardo M."/>
            <person name="Yu L."/>
            <person name="Norris J.W."/>
            <person name="Peng Y."/>
            <person name="Gripp K.W."/>
            <person name="Aleck K.A."/>
            <person name="Li C."/>
            <person name="Spence E."/>
            <person name="Choi T.I."/>
            <person name="Kwon S.J."/>
            <person name="Park H.M."/>
            <person name="Yu D."/>
            <person name="Do Heo W."/>
            <person name="Mooney M.R."/>
            <person name="Baig S.M."/>
            <person name="Wentzensen I.M."/>
            <person name="Telegrafi A."/>
            <person name="McWalter K."/>
            <person name="Moreland T."/>
            <person name="Roadhouse C."/>
            <person name="Ramsey K."/>
            <person name="Lyons M.J."/>
            <person name="Skinner C."/>
            <person name="Alexov E."/>
            <person name="Katsanis N."/>
            <person name="Stevenson R.E."/>
            <person name="Choudhary J.S."/>
            <person name="Adams D.J."/>
            <person name="Kim C.H."/>
            <person name="Davis E.E."/>
            <person name="Schwartz C.E."/>
        </authorList>
    </citation>
    <scope>FUNCTION</scope>
    <scope>INTERACTION WITH EFTUD2 AND DDX41</scope>
    <scope>TISSUE SPECIFICITY</scope>
    <scope>SUBCELLULAR LOCATION</scope>
    <scope>INVOLVEMENT IN MRXSA</scope>
    <scope>VARIANTS MRXSA GLY-206; GLY-254; ASN-255; GLY-255 AND TRP-273</scope>
    <scope>CHARACTERIZATION OF VARIANTS MRXSA GLY-206; GLY-254; ASN-255; GLY-255 AND TRP-273</scope>
    <scope>CHARACTERIZATION OF VARIANTS VAL-137 AND LYS-143</scope>
</reference>
<sequence>MAQYKGAASEAGRAMHLMKKREKQREQMEQMKQRIAEENIMKSNIDKKFSAHYDAVEAELKSSTVGLVTLNDMKAKQEALVKEREKQLAKKEQSKELQMKLEKLREKERKKEAKRKISSLSFTLEEEEEGGEEEEEAAMYEEEMEREEITTKKRKLGKNPDVDTSFLPDRDREEEENRLREELRQEWEAKQEKIKSEEIEITFSYWDGSGHRRTVKMRKGNTMQQFLQKALEILRKDFSELRSAGVEQLMYIKEDLIIPHHHSFYDFIVTKARGKSGPLFNFDVHDDVRLLSDATVEKDESHAGKVVLRSWYEKNKHIFPASRWEPYDPEKKWDKYTIR</sequence>
<gene>
    <name type="primary">FAM50A</name>
    <name type="synonym">DXS9928E</name>
    <name type="synonym">HXC26</name>
    <name type="synonym">XAP5</name>
</gene>
<keyword id="KW-0002">3D-structure</keyword>
<keyword id="KW-0007">Acetylation</keyword>
<keyword id="KW-0903">Direct protein sequencing</keyword>
<keyword id="KW-0225">Disease variant</keyword>
<keyword id="KW-0991">Intellectual disability</keyword>
<keyword id="KW-1017">Isopeptide bond</keyword>
<keyword id="KW-0507">mRNA processing</keyword>
<keyword id="KW-0508">mRNA splicing</keyword>
<keyword id="KW-0539">Nucleus</keyword>
<keyword id="KW-1267">Proteomics identification</keyword>
<keyword id="KW-1185">Reference proteome</keyword>
<keyword id="KW-0832">Ubl conjugation</keyword>